<dbReference type="EMBL" id="CP000552">
    <property type="protein sequence ID" value="ABM72886.1"/>
    <property type="molecule type" value="Genomic_DNA"/>
</dbReference>
<dbReference type="RefSeq" id="WP_011820979.1">
    <property type="nucleotide sequence ID" value="NC_008817.1"/>
</dbReference>
<dbReference type="SMR" id="A2BYM5"/>
<dbReference type="STRING" id="167542.P9515_16791"/>
<dbReference type="GeneID" id="60201187"/>
<dbReference type="KEGG" id="pmc:P9515_16791"/>
<dbReference type="eggNOG" id="COG2127">
    <property type="taxonomic scope" value="Bacteria"/>
</dbReference>
<dbReference type="HOGENOM" id="CLU_134083_1_0_3"/>
<dbReference type="OrthoDB" id="9796121at2"/>
<dbReference type="Proteomes" id="UP000001589">
    <property type="component" value="Chromosome"/>
</dbReference>
<dbReference type="GO" id="GO:0030163">
    <property type="term" value="P:protein catabolic process"/>
    <property type="evidence" value="ECO:0007669"/>
    <property type="project" value="InterPro"/>
</dbReference>
<dbReference type="GO" id="GO:0006508">
    <property type="term" value="P:proteolysis"/>
    <property type="evidence" value="ECO:0007669"/>
    <property type="project" value="UniProtKB-UniRule"/>
</dbReference>
<dbReference type="Gene3D" id="3.30.1390.10">
    <property type="match status" value="1"/>
</dbReference>
<dbReference type="HAMAP" id="MF_00302">
    <property type="entry name" value="ClpS"/>
    <property type="match status" value="1"/>
</dbReference>
<dbReference type="InterPro" id="IPR022935">
    <property type="entry name" value="ClpS"/>
</dbReference>
<dbReference type="InterPro" id="IPR003769">
    <property type="entry name" value="ClpS_core"/>
</dbReference>
<dbReference type="InterPro" id="IPR014719">
    <property type="entry name" value="Ribosomal_bL12_C/ClpS-like"/>
</dbReference>
<dbReference type="NCBIfam" id="NF000671">
    <property type="entry name" value="PRK00033.1-4"/>
    <property type="match status" value="1"/>
</dbReference>
<dbReference type="PANTHER" id="PTHR33473:SF19">
    <property type="entry name" value="ATP-DEPENDENT CLP PROTEASE ADAPTER PROTEIN CLPS"/>
    <property type="match status" value="1"/>
</dbReference>
<dbReference type="PANTHER" id="PTHR33473">
    <property type="entry name" value="ATP-DEPENDENT CLP PROTEASE ADAPTER PROTEIN CLPS1, CHLOROPLASTIC"/>
    <property type="match status" value="1"/>
</dbReference>
<dbReference type="Pfam" id="PF02617">
    <property type="entry name" value="ClpS"/>
    <property type="match status" value="1"/>
</dbReference>
<dbReference type="SUPFAM" id="SSF54736">
    <property type="entry name" value="ClpS-like"/>
    <property type="match status" value="1"/>
</dbReference>
<evidence type="ECO:0000255" key="1">
    <source>
        <dbReference type="HAMAP-Rule" id="MF_00302"/>
    </source>
</evidence>
<reference key="1">
    <citation type="journal article" date="2007" name="PLoS Genet.">
        <title>Patterns and implications of gene gain and loss in the evolution of Prochlorococcus.</title>
        <authorList>
            <person name="Kettler G.C."/>
            <person name="Martiny A.C."/>
            <person name="Huang K."/>
            <person name="Zucker J."/>
            <person name="Coleman M.L."/>
            <person name="Rodrigue S."/>
            <person name="Chen F."/>
            <person name="Lapidus A."/>
            <person name="Ferriera S."/>
            <person name="Johnson J."/>
            <person name="Steglich C."/>
            <person name="Church G.M."/>
            <person name="Richardson P."/>
            <person name="Chisholm S.W."/>
        </authorList>
    </citation>
    <scope>NUCLEOTIDE SEQUENCE [LARGE SCALE GENOMIC DNA]</scope>
    <source>
        <strain>MIT 9515</strain>
    </source>
</reference>
<proteinExistence type="inferred from homology"/>
<protein>
    <recommendedName>
        <fullName evidence="1">ATP-dependent Clp protease adapter protein ClpS</fullName>
    </recommendedName>
</protein>
<organism>
    <name type="scientific">Prochlorococcus marinus (strain MIT 9515)</name>
    <dbReference type="NCBI Taxonomy" id="167542"/>
    <lineage>
        <taxon>Bacteria</taxon>
        <taxon>Bacillati</taxon>
        <taxon>Cyanobacteriota</taxon>
        <taxon>Cyanophyceae</taxon>
        <taxon>Synechococcales</taxon>
        <taxon>Prochlorococcaceae</taxon>
        <taxon>Prochlorococcus</taxon>
    </lineage>
</organism>
<accession>A2BYM5</accession>
<name>CLPS_PROM5</name>
<gene>
    <name evidence="1" type="primary">clpS</name>
    <name type="ordered locus">P9515_16791</name>
</gene>
<feature type="chain" id="PRO_1000115466" description="ATP-dependent Clp protease adapter protein ClpS">
    <location>
        <begin position="1"/>
        <end position="105"/>
    </location>
</feature>
<sequence>MSIIKLEKGDNNNAAVLEKKTAALKNKSPKYKVLLHNDPVNSMEYITIALREVVPQLSEQDAIAIMLEAHNNGVGLVIVCDLEPAEFYSESLKSKGISSSIEKDE</sequence>
<comment type="function">
    <text evidence="1">Involved in the modulation of the specificity of the ClpAP-mediated ATP-dependent protein degradation.</text>
</comment>
<comment type="subunit">
    <text evidence="1">Binds to the N-terminal domain of the chaperone ClpA.</text>
</comment>
<comment type="similarity">
    <text evidence="1">Belongs to the ClpS family.</text>
</comment>